<protein>
    <recommendedName>
        <fullName evidence="1">Transcriptional repressor NrdR</fullName>
    </recommendedName>
</protein>
<dbReference type="EMBL" id="FM211192">
    <property type="protein sequence ID" value="CAR71100.1"/>
    <property type="molecule type" value="Genomic_DNA"/>
</dbReference>
<dbReference type="SMR" id="B8ZQU7"/>
<dbReference type="KEGG" id="mlb:MLBr01005"/>
<dbReference type="HOGENOM" id="CLU_108412_1_0_11"/>
<dbReference type="Proteomes" id="UP000006900">
    <property type="component" value="Chromosome"/>
</dbReference>
<dbReference type="GO" id="GO:0005524">
    <property type="term" value="F:ATP binding"/>
    <property type="evidence" value="ECO:0007669"/>
    <property type="project" value="UniProtKB-KW"/>
</dbReference>
<dbReference type="GO" id="GO:0003677">
    <property type="term" value="F:DNA binding"/>
    <property type="evidence" value="ECO:0007669"/>
    <property type="project" value="UniProtKB-KW"/>
</dbReference>
<dbReference type="GO" id="GO:0008270">
    <property type="term" value="F:zinc ion binding"/>
    <property type="evidence" value="ECO:0007669"/>
    <property type="project" value="UniProtKB-UniRule"/>
</dbReference>
<dbReference type="GO" id="GO:0045892">
    <property type="term" value="P:negative regulation of DNA-templated transcription"/>
    <property type="evidence" value="ECO:0007669"/>
    <property type="project" value="UniProtKB-UniRule"/>
</dbReference>
<dbReference type="HAMAP" id="MF_00440">
    <property type="entry name" value="NrdR"/>
    <property type="match status" value="1"/>
</dbReference>
<dbReference type="InterPro" id="IPR005144">
    <property type="entry name" value="ATP-cone_dom"/>
</dbReference>
<dbReference type="InterPro" id="IPR055173">
    <property type="entry name" value="NrdR-like_N"/>
</dbReference>
<dbReference type="InterPro" id="IPR003796">
    <property type="entry name" value="RNR_NrdR-like"/>
</dbReference>
<dbReference type="NCBIfam" id="TIGR00244">
    <property type="entry name" value="transcriptional regulator NrdR"/>
    <property type="match status" value="1"/>
</dbReference>
<dbReference type="PANTHER" id="PTHR30455">
    <property type="entry name" value="TRANSCRIPTIONAL REPRESSOR NRDR"/>
    <property type="match status" value="1"/>
</dbReference>
<dbReference type="PANTHER" id="PTHR30455:SF2">
    <property type="entry name" value="TRANSCRIPTIONAL REPRESSOR NRDR"/>
    <property type="match status" value="1"/>
</dbReference>
<dbReference type="Pfam" id="PF03477">
    <property type="entry name" value="ATP-cone"/>
    <property type="match status" value="1"/>
</dbReference>
<dbReference type="Pfam" id="PF22811">
    <property type="entry name" value="Zn_ribbon_NrdR"/>
    <property type="match status" value="1"/>
</dbReference>
<dbReference type="PROSITE" id="PS51161">
    <property type="entry name" value="ATP_CONE"/>
    <property type="match status" value="1"/>
</dbReference>
<feature type="chain" id="PRO_1000191807" description="Transcriptional repressor NrdR">
    <location>
        <begin position="1"/>
        <end position="154"/>
    </location>
</feature>
<feature type="domain" description="ATP-cone" evidence="1">
    <location>
        <begin position="46"/>
        <end position="136"/>
    </location>
</feature>
<feature type="zinc finger region" evidence="1">
    <location>
        <begin position="3"/>
        <end position="34"/>
    </location>
</feature>
<comment type="function">
    <text evidence="1">Negatively regulates transcription of bacterial ribonucleotide reductase nrd genes and operons by binding to NrdR-boxes.</text>
</comment>
<comment type="cofactor">
    <cofactor evidence="1">
        <name>Zn(2+)</name>
        <dbReference type="ChEBI" id="CHEBI:29105"/>
    </cofactor>
    <text evidence="1">Binds 1 zinc ion.</text>
</comment>
<comment type="similarity">
    <text evidence="1">Belongs to the NrdR family.</text>
</comment>
<organism>
    <name type="scientific">Mycobacterium leprae (strain Br4923)</name>
    <dbReference type="NCBI Taxonomy" id="561304"/>
    <lineage>
        <taxon>Bacteria</taxon>
        <taxon>Bacillati</taxon>
        <taxon>Actinomycetota</taxon>
        <taxon>Actinomycetes</taxon>
        <taxon>Mycobacteriales</taxon>
        <taxon>Mycobacteriaceae</taxon>
        <taxon>Mycobacterium</taxon>
    </lineage>
</organism>
<keyword id="KW-0067">ATP-binding</keyword>
<keyword id="KW-0238">DNA-binding</keyword>
<keyword id="KW-0479">Metal-binding</keyword>
<keyword id="KW-0547">Nucleotide-binding</keyword>
<keyword id="KW-0678">Repressor</keyword>
<keyword id="KW-0804">Transcription</keyword>
<keyword id="KW-0805">Transcription regulation</keyword>
<keyword id="KW-0862">Zinc</keyword>
<keyword id="KW-0863">Zinc-finger</keyword>
<accession>B8ZQU7</accession>
<sequence length="154" mass="17326">MHCPFCRHSDSRVIDSRETDEGQAIRRRRSCPECGRRFTTVETAVVAVVKRSGVTEPFSRGKVIRGVRRACQGRQVDDDALNLLAQQVEDTVRAAGLPEVPSHEVGLAILGPLRELDEVAYLRFASVYRSFSSADDFEREIEALRAHRRVSTSR</sequence>
<reference key="1">
    <citation type="journal article" date="2009" name="Nat. Genet.">
        <title>Comparative genomic and phylogeographic analysis of Mycobacterium leprae.</title>
        <authorList>
            <person name="Monot M."/>
            <person name="Honore N."/>
            <person name="Garnier T."/>
            <person name="Zidane N."/>
            <person name="Sherafi D."/>
            <person name="Paniz-Mondolfi A."/>
            <person name="Matsuoka M."/>
            <person name="Taylor G.M."/>
            <person name="Donoghue H.D."/>
            <person name="Bouwman A."/>
            <person name="Mays S."/>
            <person name="Watson C."/>
            <person name="Lockwood D."/>
            <person name="Khamispour A."/>
            <person name="Dowlati Y."/>
            <person name="Jianping S."/>
            <person name="Rea T.H."/>
            <person name="Vera-Cabrera L."/>
            <person name="Stefani M.M."/>
            <person name="Banu S."/>
            <person name="Macdonald M."/>
            <person name="Sapkota B.R."/>
            <person name="Spencer J.S."/>
            <person name="Thomas J."/>
            <person name="Harshman K."/>
            <person name="Singh P."/>
            <person name="Busso P."/>
            <person name="Gattiker A."/>
            <person name="Rougemont J."/>
            <person name="Brennan P.J."/>
            <person name="Cole S.T."/>
        </authorList>
    </citation>
    <scope>NUCLEOTIDE SEQUENCE [LARGE SCALE GENOMIC DNA]</scope>
    <source>
        <strain>Br4923</strain>
    </source>
</reference>
<name>NRDR_MYCLB</name>
<evidence type="ECO:0000255" key="1">
    <source>
        <dbReference type="HAMAP-Rule" id="MF_00440"/>
    </source>
</evidence>
<gene>
    <name evidence="1" type="primary">nrdR</name>
    <name type="ordered locus">MLBr01005</name>
</gene>
<proteinExistence type="inferred from homology"/>